<proteinExistence type="evidence at protein level"/>
<name>GLGL2_ORYSJ</name>
<accession>Q7G065</accession>
<accession>B8XEC7</accession>
<accession>Q5VNT5</accession>
<accession>Q9ARI0</accession>
<feature type="chain" id="PRO_0000441125" description="Glucose-1-phosphate adenylyltransferase large subunit 2, cytosolic">
    <location>
        <begin position="1"/>
        <end position="518"/>
    </location>
</feature>
<feature type="mutagenesis site" description="Reduces activity more than 3-fold." evidence="3">
    <original>T</original>
    <variation>V</variation>
    <location>
        <position position="139"/>
    </location>
</feature>
<feature type="mutagenesis site" description="Reduces activity more than 3-fold." evidence="3">
    <original>A</original>
    <variation>I</variation>
    <location>
        <position position="171"/>
    </location>
</feature>
<feature type="mutagenesis site" description="In agpl2-3; white-core endosperm, and round and loosely packed starch granules in the grains." evidence="5">
    <original>E</original>
    <variation>K</variation>
    <location>
        <position position="326"/>
    </location>
</feature>
<feature type="sequence conflict" description="In Ref. 1; AAK27727." evidence="11" ref="1">
    <original>Q</original>
    <variation>E</variation>
    <location>
        <position position="2"/>
    </location>
</feature>
<feature type="sequence conflict" description="In Ref. 5; ACJ71339." evidence="11" ref="5">
    <original>H</original>
    <variation>R</variation>
    <location>
        <position position="228"/>
    </location>
</feature>
<feature type="sequence conflict" description="In Ref. 1; AAK27727." evidence="11" ref="1">
    <original>DGTV</original>
    <variation>HGPI</variation>
    <location>
        <begin position="514"/>
        <end position="517"/>
    </location>
</feature>
<evidence type="ECO:0000269" key="1">
    <source>
    </source>
</evidence>
<evidence type="ECO:0000269" key="2">
    <source>
    </source>
</evidence>
<evidence type="ECO:0000269" key="3">
    <source>
    </source>
</evidence>
<evidence type="ECO:0000269" key="4">
    <source>
    </source>
</evidence>
<evidence type="ECO:0000269" key="5">
    <source ref="13"/>
</evidence>
<evidence type="ECO:0000303" key="6">
    <source>
    </source>
</evidence>
<evidence type="ECO:0000303" key="7">
    <source>
    </source>
</evidence>
<evidence type="ECO:0000303" key="8">
    <source>
    </source>
</evidence>
<evidence type="ECO:0000303" key="9">
    <source>
    </source>
</evidence>
<evidence type="ECO:0000303" key="10">
    <source ref="13"/>
</evidence>
<evidence type="ECO:0000305" key="11"/>
<evidence type="ECO:0000312" key="12">
    <source>
        <dbReference type="EMBL" id="BAD68891.1"/>
    </source>
</evidence>
<evidence type="ECO:0000312" key="13">
    <source>
        <dbReference type="EMBL" id="BAF05568.1"/>
    </source>
</evidence>
<gene>
    <name evidence="7" type="primary">AGPL2</name>
    <name evidence="6" type="synonym">APL2</name>
    <name evidence="10" type="synonym">FLO6</name>
    <name evidence="9" type="synonym">GIF2</name>
    <name evidence="8" type="synonym">SHR1</name>
    <name evidence="13" type="ordered locus">Os01g0633100</name>
    <name evidence="11" type="ordered locus">LOC_Os01g44220</name>
    <name evidence="12" type="ORF">P0663E10.9</name>
</gene>
<dbReference type="EC" id="2.7.7.27" evidence="3"/>
<dbReference type="EMBL" id="AY028314">
    <property type="protein sequence ID" value="AAK27727.1"/>
    <property type="molecule type" value="mRNA"/>
</dbReference>
<dbReference type="EMBL" id="GQ150815">
    <property type="protein sequence ID" value="ACY56030.1"/>
    <property type="molecule type" value="Genomic_DNA"/>
</dbReference>
<dbReference type="EMBL" id="GQ150816">
    <property type="protein sequence ID" value="ACY56031.1"/>
    <property type="molecule type" value="Genomic_DNA"/>
</dbReference>
<dbReference type="EMBL" id="GQ150817">
    <property type="protein sequence ID" value="ACY56032.1"/>
    <property type="molecule type" value="Genomic_DNA"/>
</dbReference>
<dbReference type="EMBL" id="GQ150818">
    <property type="protein sequence ID" value="ACY56033.1"/>
    <property type="molecule type" value="Genomic_DNA"/>
</dbReference>
<dbReference type="EMBL" id="GQ150819">
    <property type="protein sequence ID" value="ACY56034.1"/>
    <property type="molecule type" value="Genomic_DNA"/>
</dbReference>
<dbReference type="EMBL" id="GQ150820">
    <property type="protein sequence ID" value="ACY56035.1"/>
    <property type="molecule type" value="Genomic_DNA"/>
</dbReference>
<dbReference type="EMBL" id="AF101045">
    <property type="protein sequence ID" value="AAF21886.1"/>
    <property type="molecule type" value="Genomic_DNA"/>
</dbReference>
<dbReference type="EMBL" id="EU267956">
    <property type="protein sequence ID" value="ACA50478.1"/>
    <property type="molecule type" value="mRNA"/>
</dbReference>
<dbReference type="EMBL" id="FJ235694">
    <property type="protein sequence ID" value="ACJ71331.1"/>
    <property type="molecule type" value="Genomic_DNA"/>
</dbReference>
<dbReference type="EMBL" id="FJ235702">
    <property type="protein sequence ID" value="ACJ71339.1"/>
    <property type="molecule type" value="Genomic_DNA"/>
</dbReference>
<dbReference type="EMBL" id="FJ235709">
    <property type="protein sequence ID" value="ACJ71346.1"/>
    <property type="molecule type" value="Genomic_DNA"/>
</dbReference>
<dbReference type="EMBL" id="FJ235711">
    <property type="protein sequence ID" value="ACJ71348.1"/>
    <property type="molecule type" value="Genomic_DNA"/>
</dbReference>
<dbReference type="EMBL" id="AP004317">
    <property type="protein sequence ID" value="BAD68891.1"/>
    <property type="status" value="ALT_INIT"/>
    <property type="molecule type" value="Genomic_DNA"/>
</dbReference>
<dbReference type="EMBL" id="AP008207">
    <property type="protein sequence ID" value="BAF05568.1"/>
    <property type="molecule type" value="Genomic_DNA"/>
</dbReference>
<dbReference type="EMBL" id="AP014957">
    <property type="protein sequence ID" value="BAS73313.1"/>
    <property type="molecule type" value="Genomic_DNA"/>
</dbReference>
<dbReference type="EMBL" id="AK071497">
    <property type="protein sequence ID" value="BAG92523.1"/>
    <property type="molecule type" value="mRNA"/>
</dbReference>
<dbReference type="RefSeq" id="XP_015650370.1">
    <property type="nucleotide sequence ID" value="XM_015794884.1"/>
</dbReference>
<dbReference type="RefSeq" id="XP_015650378.1">
    <property type="nucleotide sequence ID" value="XM_015794892.1"/>
</dbReference>
<dbReference type="SMR" id="Q7G065"/>
<dbReference type="FunCoup" id="Q7G065">
    <property type="interactions" value="246"/>
</dbReference>
<dbReference type="STRING" id="39947.Q7G065"/>
<dbReference type="PaxDb" id="39947-Q7G065"/>
<dbReference type="EnsemblPlants" id="Os01t0633100-01">
    <property type="protein sequence ID" value="Os01t0633100-01"/>
    <property type="gene ID" value="Os01g0633100"/>
</dbReference>
<dbReference type="GeneID" id="4326594"/>
<dbReference type="Gramene" id="Os01t0633100-01">
    <property type="protein sequence ID" value="Os01t0633100-01"/>
    <property type="gene ID" value="Os01g0633100"/>
</dbReference>
<dbReference type="KEGG" id="dosa:Os01g0633100"/>
<dbReference type="KEGG" id="osa:4326594"/>
<dbReference type="eggNOG" id="KOG1322">
    <property type="taxonomic scope" value="Eukaryota"/>
</dbReference>
<dbReference type="HOGENOM" id="CLU_029499_14_4_1"/>
<dbReference type="InParanoid" id="Q7G065"/>
<dbReference type="OMA" id="QYIASMG"/>
<dbReference type="OrthoDB" id="1733332at2759"/>
<dbReference type="BRENDA" id="2.7.7.27">
    <property type="organism ID" value="4460"/>
</dbReference>
<dbReference type="PlantReactome" id="R-OSA-1119477">
    <property type="pathway name" value="Starch biosynthesis"/>
</dbReference>
<dbReference type="PlantReactome" id="R-OSA-9626305">
    <property type="pathway name" value="Regulatory network of nutrient accumulation"/>
</dbReference>
<dbReference type="UniPathway" id="UPA00152"/>
<dbReference type="Proteomes" id="UP000000763">
    <property type="component" value="Chromosome 1"/>
</dbReference>
<dbReference type="Proteomes" id="UP000059680">
    <property type="component" value="Chromosome 1"/>
</dbReference>
<dbReference type="GO" id="GO:0005829">
    <property type="term" value="C:cytosol"/>
    <property type="evidence" value="ECO:0000314"/>
    <property type="project" value="UniProtKB"/>
</dbReference>
<dbReference type="GO" id="GO:0010170">
    <property type="term" value="C:glucose-1-phosphate adenylyltransferase complex"/>
    <property type="evidence" value="ECO:0000314"/>
    <property type="project" value="UniProtKB"/>
</dbReference>
<dbReference type="GO" id="GO:0005524">
    <property type="term" value="F:ATP binding"/>
    <property type="evidence" value="ECO:0007669"/>
    <property type="project" value="UniProtKB-KW"/>
</dbReference>
<dbReference type="GO" id="GO:0008878">
    <property type="term" value="F:glucose-1-phosphate adenylyltransferase activity"/>
    <property type="evidence" value="ECO:0000314"/>
    <property type="project" value="UniProtKB"/>
</dbReference>
<dbReference type="GO" id="GO:0005978">
    <property type="term" value="P:glycogen biosynthetic process"/>
    <property type="evidence" value="ECO:0007669"/>
    <property type="project" value="InterPro"/>
</dbReference>
<dbReference type="GO" id="GO:0019252">
    <property type="term" value="P:starch biosynthetic process"/>
    <property type="evidence" value="ECO:0000315"/>
    <property type="project" value="UniProtKB"/>
</dbReference>
<dbReference type="CDD" id="cd02508">
    <property type="entry name" value="ADP_Glucose_PP"/>
    <property type="match status" value="1"/>
</dbReference>
<dbReference type="CDD" id="cd04651">
    <property type="entry name" value="LbH_G1P_AT_C"/>
    <property type="match status" value="1"/>
</dbReference>
<dbReference type="FunFam" id="2.160.10.10:FF:000010">
    <property type="entry name" value="Glucose-1-phosphate adenylyltransferase"/>
    <property type="match status" value="1"/>
</dbReference>
<dbReference type="FunFam" id="3.90.550.10:FF:000030">
    <property type="entry name" value="Glucose-1-phosphate adenylyltransferase"/>
    <property type="match status" value="1"/>
</dbReference>
<dbReference type="Gene3D" id="2.160.10.10">
    <property type="entry name" value="Hexapeptide repeat proteins"/>
    <property type="match status" value="1"/>
</dbReference>
<dbReference type="Gene3D" id="3.90.550.10">
    <property type="entry name" value="Spore Coat Polysaccharide Biosynthesis Protein SpsA, Chain A"/>
    <property type="match status" value="1"/>
</dbReference>
<dbReference type="InterPro" id="IPR011831">
    <property type="entry name" value="ADP-Glc_PPase"/>
</dbReference>
<dbReference type="InterPro" id="IPR005836">
    <property type="entry name" value="ADP_Glu_pyroP_CS"/>
</dbReference>
<dbReference type="InterPro" id="IPR005835">
    <property type="entry name" value="NTP_transferase_dom"/>
</dbReference>
<dbReference type="InterPro" id="IPR029044">
    <property type="entry name" value="Nucleotide-diphossugar_trans"/>
</dbReference>
<dbReference type="InterPro" id="IPR011004">
    <property type="entry name" value="Trimer_LpxA-like_sf"/>
</dbReference>
<dbReference type="NCBIfam" id="NF002772">
    <property type="entry name" value="PRK02862.1"/>
    <property type="match status" value="1"/>
</dbReference>
<dbReference type="PANTHER" id="PTHR43523:SF1">
    <property type="entry name" value="GLUCOSE-1-PHOSPHATE ADENYLYLTRANSFERASE LARGE SUBUNIT 2, CYTOSOLIC"/>
    <property type="match status" value="1"/>
</dbReference>
<dbReference type="PANTHER" id="PTHR43523">
    <property type="entry name" value="GLUCOSE-1-PHOSPHATE ADENYLYLTRANSFERASE-RELATED"/>
    <property type="match status" value="1"/>
</dbReference>
<dbReference type="Pfam" id="PF25247">
    <property type="entry name" value="LbH_GLGC"/>
    <property type="match status" value="1"/>
</dbReference>
<dbReference type="Pfam" id="PF00483">
    <property type="entry name" value="NTP_transferase"/>
    <property type="match status" value="1"/>
</dbReference>
<dbReference type="SUPFAM" id="SSF53448">
    <property type="entry name" value="Nucleotide-diphospho-sugar transferases"/>
    <property type="match status" value="1"/>
</dbReference>
<dbReference type="SUPFAM" id="SSF51161">
    <property type="entry name" value="Trimeric LpxA-like enzymes"/>
    <property type="match status" value="1"/>
</dbReference>
<dbReference type="PROSITE" id="PS00809">
    <property type="entry name" value="ADP_GLC_PYROPHOSPH_2"/>
    <property type="match status" value="1"/>
</dbReference>
<dbReference type="PROSITE" id="PS00810">
    <property type="entry name" value="ADP_GLC_PYROPHOSPH_3"/>
    <property type="match status" value="1"/>
</dbReference>
<organism>
    <name type="scientific">Oryza sativa subsp. japonica</name>
    <name type="common">Rice</name>
    <dbReference type="NCBI Taxonomy" id="39947"/>
    <lineage>
        <taxon>Eukaryota</taxon>
        <taxon>Viridiplantae</taxon>
        <taxon>Streptophyta</taxon>
        <taxon>Embryophyta</taxon>
        <taxon>Tracheophyta</taxon>
        <taxon>Spermatophyta</taxon>
        <taxon>Magnoliopsida</taxon>
        <taxon>Liliopsida</taxon>
        <taxon>Poales</taxon>
        <taxon>Poaceae</taxon>
        <taxon>BOP clade</taxon>
        <taxon>Oryzoideae</taxon>
        <taxon>Oryzeae</taxon>
        <taxon>Oryzinae</taxon>
        <taxon>Oryza</taxon>
        <taxon>Oryza sativa</taxon>
    </lineage>
</organism>
<keyword id="KW-0021">Allosteric enzyme</keyword>
<keyword id="KW-0067">ATP-binding</keyword>
<keyword id="KW-0963">Cytoplasm</keyword>
<keyword id="KW-0547">Nucleotide-binding</keyword>
<keyword id="KW-0548">Nucleotidyltransferase</keyword>
<keyword id="KW-1185">Reference proteome</keyword>
<keyword id="KW-0750">Starch biosynthesis</keyword>
<keyword id="KW-0808">Transferase</keyword>
<protein>
    <recommendedName>
        <fullName evidence="11">Glucose-1-phosphate adenylyltransferase large subunit 2, cytosolic</fullName>
        <shortName evidence="7">OsAGPL2</shortName>
        <shortName evidence="6">OsAPL2</shortName>
        <ecNumber evidence="3">2.7.7.27</ecNumber>
    </recommendedName>
    <alternativeName>
        <fullName evidence="11">ADP-glucose pyrophosphorylase AGPL2</fullName>
    </alternativeName>
    <alternativeName>
        <fullName evidence="11">ADP-glucose synthase AGPL2</fullName>
    </alternativeName>
    <alternativeName>
        <fullName evidence="10">Protein FLOURY ENDOSPERM 6</fullName>
    </alternativeName>
    <alternativeName>
        <fullName evidence="9">Protein GRAIN INCOMPLETE FILLING 2</fullName>
    </alternativeName>
    <alternativeName>
        <fullName evidence="8">Protein SHRUNKEN 1</fullName>
    </alternativeName>
</protein>
<reference key="1">
    <citation type="journal article" date="2001" name="Plant Sci.">
        <title>Subcellular compartmentation and allosteric regulation of the rice endosperm ADPglucose pyrophosphorylase.</title>
        <authorList>
            <person name="Sikka V.K."/>
            <person name="Choi S.-B."/>
            <person name="Kavakli I.H."/>
            <person name="Sakulsingharoj C."/>
            <person name="Gupta S."/>
            <person name="Ito H."/>
            <person name="Okita T.W."/>
        </authorList>
    </citation>
    <scope>NUCLEOTIDE SEQUENCE [MRNA]</scope>
</reference>
<reference key="2">
    <citation type="journal article" date="2009" name="Proc. Natl. Acad. Sci. U.S.A.">
        <title>Allelic diversities in rice starch biosynthesis lead to a diverse array of rice eating and cooking qualities.</title>
        <authorList>
            <person name="Tian Z."/>
            <person name="Qian Q."/>
            <person name="Liu Q."/>
            <person name="Yan M."/>
            <person name="Liu X."/>
            <person name="Yan C."/>
            <person name="Liu G."/>
            <person name="Gao Z."/>
            <person name="Tang S."/>
            <person name="Zeng D."/>
            <person name="Wang Y."/>
            <person name="Yu J."/>
            <person name="Gu M."/>
            <person name="Li J."/>
        </authorList>
    </citation>
    <scope>NUCLEOTIDE SEQUENCE [GENOMIC DNA]</scope>
</reference>
<reference key="3">
    <citation type="submission" date="1998-10" db="EMBL/GenBank/DDBJ databases">
        <title>Different rates of divergence in Sh2/A1-homologous regions of rice.</title>
        <authorList>
            <person name="Chen M."/>
            <person name="Lucas J.R."/>
            <person name="Bennetzen J.L."/>
        </authorList>
    </citation>
    <scope>NUCLEOTIDE SEQUENCE [GENOMIC DNA]</scope>
</reference>
<reference key="4">
    <citation type="submission" date="2007-11" db="EMBL/GenBank/DDBJ databases">
        <title>Molecular cloning of the ADP-glucose pyrophosphorylase genes in rice.</title>
        <authorList>
            <person name="Yoon U.H."/>
            <person name="Kim Y.H."/>
        </authorList>
    </citation>
    <scope>NUCLEOTIDE SEQUENCE [MRNA]</scope>
    <source>
        <strain>cv. Ilpoombyeo</strain>
    </source>
</reference>
<reference key="5">
    <citation type="submission" date="2008-09" db="EMBL/GenBank/DDBJ databases">
        <title>Development of SNP-based CAPS and dCAPS markers in eight different genes involved in starch biosynthesis in rice.</title>
        <authorList>
            <person name="Ma K.-H."/>
            <person name="Lee G.-A."/>
            <person name="Gwag J.-G."/>
            <person name="Lee S.-Y."/>
            <person name="Lee J.-R."/>
            <person name="Kim T.-S."/>
            <person name="Park Y.-J."/>
        </authorList>
    </citation>
    <scope>NUCLEOTIDE SEQUENCE [GENOMIC DNA]</scope>
</reference>
<reference key="6">
    <citation type="journal article" date="2002" name="Nature">
        <title>The genome sequence and structure of rice chromosome 1.</title>
        <authorList>
            <person name="Sasaki T."/>
            <person name="Matsumoto T."/>
            <person name="Yamamoto K."/>
            <person name="Sakata K."/>
            <person name="Baba T."/>
            <person name="Katayose Y."/>
            <person name="Wu J."/>
            <person name="Niimura Y."/>
            <person name="Cheng Z."/>
            <person name="Nagamura Y."/>
            <person name="Antonio B.A."/>
            <person name="Kanamori H."/>
            <person name="Hosokawa S."/>
            <person name="Masukawa M."/>
            <person name="Arikawa K."/>
            <person name="Chiden Y."/>
            <person name="Hayashi M."/>
            <person name="Okamoto M."/>
            <person name="Ando T."/>
            <person name="Aoki H."/>
            <person name="Arita K."/>
            <person name="Hamada M."/>
            <person name="Harada C."/>
            <person name="Hijishita S."/>
            <person name="Honda M."/>
            <person name="Ichikawa Y."/>
            <person name="Idonuma A."/>
            <person name="Iijima M."/>
            <person name="Ikeda M."/>
            <person name="Ikeno M."/>
            <person name="Ito S."/>
            <person name="Ito T."/>
            <person name="Ito Y."/>
            <person name="Ito Y."/>
            <person name="Iwabuchi A."/>
            <person name="Kamiya K."/>
            <person name="Karasawa W."/>
            <person name="Katagiri S."/>
            <person name="Kikuta A."/>
            <person name="Kobayashi N."/>
            <person name="Kono I."/>
            <person name="Machita K."/>
            <person name="Maehara T."/>
            <person name="Mizuno H."/>
            <person name="Mizubayashi T."/>
            <person name="Mukai Y."/>
            <person name="Nagasaki H."/>
            <person name="Nakashima M."/>
            <person name="Nakama Y."/>
            <person name="Nakamichi Y."/>
            <person name="Nakamura M."/>
            <person name="Namiki N."/>
            <person name="Negishi M."/>
            <person name="Ohta I."/>
            <person name="Ono N."/>
            <person name="Saji S."/>
            <person name="Sakai K."/>
            <person name="Shibata M."/>
            <person name="Shimokawa T."/>
            <person name="Shomura A."/>
            <person name="Song J."/>
            <person name="Takazaki Y."/>
            <person name="Terasawa K."/>
            <person name="Tsuji K."/>
            <person name="Waki K."/>
            <person name="Yamagata H."/>
            <person name="Yamane H."/>
            <person name="Yoshiki S."/>
            <person name="Yoshihara R."/>
            <person name="Yukawa K."/>
            <person name="Zhong H."/>
            <person name="Iwama H."/>
            <person name="Endo T."/>
            <person name="Ito H."/>
            <person name="Hahn J.H."/>
            <person name="Kim H.-I."/>
            <person name="Eun M.-Y."/>
            <person name="Yano M."/>
            <person name="Jiang J."/>
            <person name="Gojobori T."/>
        </authorList>
    </citation>
    <scope>NUCLEOTIDE SEQUENCE [LARGE SCALE GENOMIC DNA]</scope>
    <source>
        <strain>cv. Nipponbare</strain>
    </source>
</reference>
<reference key="7">
    <citation type="journal article" date="2005" name="Nature">
        <title>The map-based sequence of the rice genome.</title>
        <authorList>
            <consortium name="International rice genome sequencing project (IRGSP)"/>
        </authorList>
    </citation>
    <scope>NUCLEOTIDE SEQUENCE [LARGE SCALE GENOMIC DNA]</scope>
    <source>
        <strain>cv. Nipponbare</strain>
    </source>
</reference>
<reference key="8">
    <citation type="journal article" date="2008" name="Nucleic Acids Res.">
        <title>The rice annotation project database (RAP-DB): 2008 update.</title>
        <authorList>
            <consortium name="The rice annotation project (RAP)"/>
        </authorList>
    </citation>
    <scope>GENOME REANNOTATION</scope>
    <source>
        <strain>cv. Nipponbare</strain>
    </source>
</reference>
<reference key="9">
    <citation type="journal article" date="2013" name="Rice">
        <title>Improvement of the Oryza sativa Nipponbare reference genome using next generation sequence and optical map data.</title>
        <authorList>
            <person name="Kawahara Y."/>
            <person name="de la Bastide M."/>
            <person name="Hamilton J.P."/>
            <person name="Kanamori H."/>
            <person name="McCombie W.R."/>
            <person name="Ouyang S."/>
            <person name="Schwartz D.C."/>
            <person name="Tanaka T."/>
            <person name="Wu J."/>
            <person name="Zhou S."/>
            <person name="Childs K.L."/>
            <person name="Davidson R.M."/>
            <person name="Lin H."/>
            <person name="Quesada-Ocampo L."/>
            <person name="Vaillancourt B."/>
            <person name="Sakai H."/>
            <person name="Lee S.S."/>
            <person name="Kim J."/>
            <person name="Numa H."/>
            <person name="Itoh T."/>
            <person name="Buell C.R."/>
            <person name="Matsumoto T."/>
        </authorList>
    </citation>
    <scope>GENOME REANNOTATION</scope>
    <source>
        <strain>cv. Nipponbare</strain>
    </source>
</reference>
<reference key="10">
    <citation type="journal article" date="2003" name="Science">
        <title>Collection, mapping, and annotation of over 28,000 cDNA clones from japonica rice.</title>
        <authorList>
            <consortium name="The rice full-length cDNA consortium"/>
        </authorList>
    </citation>
    <scope>NUCLEOTIDE SEQUENCE [LARGE SCALE MRNA]</scope>
    <source>
        <strain>cv. Nipponbare</strain>
    </source>
</reference>
<reference key="11">
    <citation type="journal article" date="2005" name="Plant Cell Physiol.">
        <title>Gene expression of ADP-glucose pyrophosphorylase and starch contents in rice cultured cells are cooperatively regulated by sucrose and ABA.</title>
        <authorList>
            <person name="Akihiro T."/>
            <person name="Mizuno K."/>
            <person name="Fujimura T."/>
        </authorList>
    </citation>
    <scope>DEVELOPMENTAL STAGE</scope>
</reference>
<reference key="12">
    <citation type="journal article" date="2007" name="Plant Mol. Biol.">
        <title>Identification of the ADP-glucose pyrophosphorylase isoforms essential for starch synthesis in the leaf and seed endosperm of rice (Oryza sativa L.).</title>
        <authorList>
            <person name="Lee S.K."/>
            <person name="Hwang S.K."/>
            <person name="Han M."/>
            <person name="Eom J.S."/>
            <person name="Kang H.G."/>
            <person name="Han Y."/>
            <person name="Choi S.B."/>
            <person name="Cho M.H."/>
            <person name="Bhoo S.H."/>
            <person name="An G."/>
            <person name="Hahn T.R."/>
            <person name="Okita T.W."/>
            <person name="Jeon J.S."/>
        </authorList>
    </citation>
    <scope>FUNCTION</scope>
    <scope>SUBCELLULAR LOCATION</scope>
    <scope>DISRUPTION PHENOTYPE</scope>
</reference>
<reference key="13">
    <citation type="journal article" date="2012" name="Plant Mol. Biol. Rep.">
        <title>Phenotypic and candidate gene analysis of a new floury endosperm mutant (osagpl2-3) in rice.</title>
        <authorList>
            <person name="Zhang D."/>
            <person name="Wu J."/>
            <person name="Zhang Y."/>
            <person name="Shi C."/>
        </authorList>
    </citation>
    <scope>FUNCTION</scope>
    <scope>MUTAGENESIS OF GLU-326</scope>
</reference>
<reference key="14">
    <citation type="journal article" date="2014" name="Plant Cell Physiol.">
        <title>The rice endosperm ADP-glucose pyrophosphorylase large subunit is essential for optimal catalysis and allosteric regulation of the heterotetrameric enzyme.</title>
        <authorList>
            <person name="Tuncel A."/>
            <person name="Kawaguchi J."/>
            <person name="Ihara Y."/>
            <person name="Matsusaka H."/>
            <person name="Nishi A."/>
            <person name="Nakamura T."/>
            <person name="Kuhara S."/>
            <person name="Hirakawa H."/>
            <person name="Nakamura Y."/>
            <person name="Cakir B."/>
            <person name="Nagamine A."/>
            <person name="Okita T.W."/>
            <person name="Hwang S.K."/>
            <person name="Satoh H."/>
        </authorList>
    </citation>
    <scope>FUNCTION</scope>
    <scope>CATALYTIC ACTIVITY</scope>
    <scope>ACTIVITY REGULATION</scope>
    <scope>SUBUNIT</scope>
    <scope>DISRUPTION PHENOTYPE</scope>
    <scope>MUTAGENESIS OF THR-139 AND ALA-171</scope>
</reference>
<reference key="15">
    <citation type="journal article" date="2017" name="J. Integr. Plant Biol.">
        <title>GRAIN INCOMPLETE FILLING 2 regulates grain filling and starch synthesis during rice caryopsis development.</title>
        <authorList>
            <person name="Wei X."/>
            <person name="Jiao G."/>
            <person name="Lin H."/>
            <person name="Sheng Z."/>
            <person name="Shao G."/>
            <person name="Xie L."/>
            <person name="Tang S."/>
            <person name="Xu Q."/>
            <person name="Hu P."/>
        </authorList>
    </citation>
    <scope>FUNCTION</scope>
    <scope>DISRUPTION PHENOTYPE</scope>
</reference>
<comment type="function">
    <text evidence="2 3 4 5">Involved in synthesis of starch. Catalyzes the synthesis of ADP-glucose, a molecule that serves as an activated glycosyl donor for alpha-1,4-glucan synthesis. Essential for starch synthesis in seed endosperm (PubMed:17406793, PubMed:24747952, PubMed:27957808, Ref.13). Is essential for both catalytic and allosteric regulatory properties of the cytosolic heterotetramer enzyme (PubMed:24747952).</text>
</comment>
<comment type="catalytic activity">
    <reaction evidence="3">
        <text>alpha-D-glucose 1-phosphate + ATP + H(+) = ADP-alpha-D-glucose + diphosphate</text>
        <dbReference type="Rhea" id="RHEA:12120"/>
        <dbReference type="ChEBI" id="CHEBI:15378"/>
        <dbReference type="ChEBI" id="CHEBI:30616"/>
        <dbReference type="ChEBI" id="CHEBI:33019"/>
        <dbReference type="ChEBI" id="CHEBI:57498"/>
        <dbReference type="ChEBI" id="CHEBI:58601"/>
        <dbReference type="EC" id="2.7.7.27"/>
    </reaction>
</comment>
<comment type="activity regulation">
    <text evidence="3">Activated by 3'phosphoglycerate, inhibited by orthophosphate. Allosteric regulation. Inhibited by inorganic phosphate (Pi).</text>
</comment>
<comment type="pathway">
    <text evidence="11">Glycan biosynthesis; starch biosynthesis.</text>
</comment>
<comment type="subunit">
    <text evidence="3">Heterotetramer composed of two small and two large subunits.</text>
</comment>
<comment type="subcellular location">
    <subcellularLocation>
        <location evidence="2">Cytoplasm</location>
        <location evidence="2">Cytosol</location>
    </subcellularLocation>
</comment>
<comment type="developmental stage">
    <text evidence="1">Expressed in developing seeds from 10 to 20 days after flowering (DAF).</text>
</comment>
<comment type="disruption phenotype">
    <text evidence="2 3 4">Shrunken seed endosperm due to a strong reduction in starch synthesis.</text>
</comment>
<comment type="similarity">
    <text evidence="11">Belongs to the bacterial/plant glucose-1-phosphate adenylyltransferase family.</text>
</comment>
<comment type="sequence caution" evidence="11">
    <conflict type="erroneous initiation">
        <sequence resource="EMBL-CDS" id="BAD68891"/>
    </conflict>
    <text>Truncated N-terminus.</text>
</comment>
<sequence>MQFMMPLDTNACAQPMRRAGEGAGTERLMERLNIGGMTQEKALRKRCFGDGVTGTARCVFTSDADRDTPHLRTQSSRKNYADASHVSAVILGGGTGVQLFPLTSTRATPAVPVGGCYRLIDIPMSNCFNSGINKIFVMTQFNSASLNRHIHHTYLGGGINFTDGSVQVLAATQMPDEPAGWFQGTADAIRKFMWILEDHYNQNNIEHVVILCGDQLYRMNYMELVQKHVDDNADITISCAPIDGSRASDYGLVKFDDSGRVIQFLEKPEGADLESMKVDTSFLSYAIDDKQKYPYIASMGIYVLKKDVLLDILKSKYAHLQDFGSEILPRAVLEHNVKACVFTEYWEDIGTIKSFFDANLALTEQPPKFEFYDPKTPFFTSPRYLPPARLEKCKIKDAIISDGCSFSECTIEHSVIGISSRVSIGCELKDTMMMGADQYETEEETSKLLFEGKVPIGIGENTKIRNCIIDMNARIGRNVIIANTQGVQESDHPEEGYYIRSGIVVILKNATIKDGTVI</sequence>